<accession>Q9PL02</accession>
<sequence>MYPVEYPPPLYSSCKHILSLTAKQLKTKAFVVFSASLSLIIGLITGCCLLFASPPAFITSGICLALLVSVISFFGCRKLIPYGIQRLISYTKSLPALSDSLIDFLKTESTSISSLLPDPKLKNCFKGTSSEYKKFFFDHPETLLSSAFMDWTPQIGPSAPQQTKTIVLSHYCLPFSLTLSTLDFETLHTYIVKSNKLRCHVGYAHQLPPANPVIRQARQGVLQQLYNTGTETFFIPIQESALLQQEELFKTLFRHYVQIIERNLSSRVLLLEPLKTPVHTHKARTLESLALFCALEYLCYTTLGDWGTKELDPTPPLDYKDFFTILIKKQCPASNMRISSPARPMNATKLTTIVLSGLEEEDKLGLLGQMQPFLFTAEIAHPQRFEATLIQNVLDDIA</sequence>
<gene>
    <name type="ordered locus">TC_0306</name>
</gene>
<evidence type="ECO:0000255" key="1"/>
<evidence type="ECO:0000305" key="2"/>
<dbReference type="EMBL" id="AE002160">
    <property type="protein sequence ID" value="AAF39171.1"/>
    <property type="molecule type" value="Genomic_DNA"/>
</dbReference>
<dbReference type="PIR" id="A81717">
    <property type="entry name" value="A81717"/>
</dbReference>
<dbReference type="RefSeq" id="WP_010230110.1">
    <property type="nucleotide sequence ID" value="NZ_CP063055.1"/>
</dbReference>
<dbReference type="GeneID" id="1246476"/>
<dbReference type="KEGG" id="cmu:TC_0306"/>
<dbReference type="HOGENOM" id="CLU_717080_0_0_0"/>
<dbReference type="OrthoDB" id="19106at2"/>
<dbReference type="Proteomes" id="UP000000800">
    <property type="component" value="Chromosome"/>
</dbReference>
<dbReference type="GO" id="GO:0005886">
    <property type="term" value="C:plasma membrane"/>
    <property type="evidence" value="ECO:0007669"/>
    <property type="project" value="UniProtKB-SubCell"/>
</dbReference>
<protein>
    <recommendedName>
        <fullName>Uncharacterized protein TC_0306</fullName>
    </recommendedName>
</protein>
<comment type="subcellular location">
    <subcellularLocation>
        <location evidence="2">Cell membrane</location>
        <topology evidence="2">Multi-pass membrane protein</topology>
    </subcellularLocation>
</comment>
<comment type="similarity">
    <text evidence="2">Belongs to the chlamydial CPn_0129/CT_036/TC_0306 family.</text>
</comment>
<proteinExistence type="inferred from homology"/>
<keyword id="KW-1003">Cell membrane</keyword>
<keyword id="KW-0472">Membrane</keyword>
<keyword id="KW-0812">Transmembrane</keyword>
<keyword id="KW-1133">Transmembrane helix</keyword>
<organism>
    <name type="scientific">Chlamydia muridarum (strain MoPn / Nigg)</name>
    <dbReference type="NCBI Taxonomy" id="243161"/>
    <lineage>
        <taxon>Bacteria</taxon>
        <taxon>Pseudomonadati</taxon>
        <taxon>Chlamydiota</taxon>
        <taxon>Chlamydiia</taxon>
        <taxon>Chlamydiales</taxon>
        <taxon>Chlamydiaceae</taxon>
        <taxon>Chlamydia/Chlamydophila group</taxon>
        <taxon>Chlamydia</taxon>
    </lineage>
</organism>
<name>Y306_CHLMU</name>
<reference key="1">
    <citation type="journal article" date="2000" name="Nucleic Acids Res.">
        <title>Genome sequences of Chlamydia trachomatis MoPn and Chlamydia pneumoniae AR39.</title>
        <authorList>
            <person name="Read T.D."/>
            <person name="Brunham R.C."/>
            <person name="Shen C."/>
            <person name="Gill S.R."/>
            <person name="Heidelberg J.F."/>
            <person name="White O."/>
            <person name="Hickey E.K."/>
            <person name="Peterson J.D."/>
            <person name="Utterback T.R."/>
            <person name="Berry K.J."/>
            <person name="Bass S."/>
            <person name="Linher K.D."/>
            <person name="Weidman J.F."/>
            <person name="Khouri H.M."/>
            <person name="Craven B."/>
            <person name="Bowman C."/>
            <person name="Dodson R.J."/>
            <person name="Gwinn M.L."/>
            <person name="Nelson W.C."/>
            <person name="DeBoy R.T."/>
            <person name="Kolonay J.F."/>
            <person name="McClarty G."/>
            <person name="Salzberg S.L."/>
            <person name="Eisen J.A."/>
            <person name="Fraser C.M."/>
        </authorList>
    </citation>
    <scope>NUCLEOTIDE SEQUENCE [LARGE SCALE GENOMIC DNA]</scope>
    <source>
        <strain>MoPn / Nigg</strain>
    </source>
</reference>
<feature type="chain" id="PRO_0000218363" description="Uncharacterized protein TC_0306">
    <location>
        <begin position="1"/>
        <end position="398"/>
    </location>
</feature>
<feature type="transmembrane region" description="Helical" evidence="1">
    <location>
        <begin position="31"/>
        <end position="51"/>
    </location>
</feature>
<feature type="transmembrane region" description="Helical" evidence="1">
    <location>
        <begin position="56"/>
        <end position="76"/>
    </location>
</feature>